<organism>
    <name type="scientific">Escherichia coli (strain K12 / DH10B)</name>
    <dbReference type="NCBI Taxonomy" id="316385"/>
    <lineage>
        <taxon>Bacteria</taxon>
        <taxon>Pseudomonadati</taxon>
        <taxon>Pseudomonadota</taxon>
        <taxon>Gammaproteobacteria</taxon>
        <taxon>Enterobacterales</taxon>
        <taxon>Enterobacteriaceae</taxon>
        <taxon>Escherichia</taxon>
    </lineage>
</organism>
<protein>
    <recommendedName>
        <fullName>S-formylglutathione hydrolase FrmB</fullName>
        <shortName>FGH</shortName>
        <ecNumber>3.1.2.12</ecNumber>
    </recommendedName>
</protein>
<dbReference type="EC" id="3.1.2.12"/>
<dbReference type="EMBL" id="CP000948">
    <property type="protein sequence ID" value="ACB01488.1"/>
    <property type="molecule type" value="Genomic_DNA"/>
</dbReference>
<dbReference type="SMR" id="B1XEU8"/>
<dbReference type="ESTHER" id="ecoli-yaim">
    <property type="family name" value="A85-EsteraseD-FGH"/>
</dbReference>
<dbReference type="MEROPS" id="S09.940"/>
<dbReference type="KEGG" id="ecd:ECDH10B_0310"/>
<dbReference type="HOGENOM" id="CLU_056472_0_0_6"/>
<dbReference type="GO" id="GO:0005829">
    <property type="term" value="C:cytosol"/>
    <property type="evidence" value="ECO:0007669"/>
    <property type="project" value="TreeGrafter"/>
</dbReference>
<dbReference type="GO" id="GO:0052689">
    <property type="term" value="F:carboxylic ester hydrolase activity"/>
    <property type="evidence" value="ECO:0007669"/>
    <property type="project" value="UniProtKB-KW"/>
</dbReference>
<dbReference type="GO" id="GO:0018738">
    <property type="term" value="F:S-formylglutathione hydrolase activity"/>
    <property type="evidence" value="ECO:0007669"/>
    <property type="project" value="UniProtKB-EC"/>
</dbReference>
<dbReference type="GO" id="GO:0046294">
    <property type="term" value="P:formaldehyde catabolic process"/>
    <property type="evidence" value="ECO:0007669"/>
    <property type="project" value="InterPro"/>
</dbReference>
<dbReference type="FunFam" id="3.40.50.1820:FF:000002">
    <property type="entry name" value="S-formylglutathione hydrolase"/>
    <property type="match status" value="1"/>
</dbReference>
<dbReference type="Gene3D" id="3.40.50.1820">
    <property type="entry name" value="alpha/beta hydrolase"/>
    <property type="match status" value="1"/>
</dbReference>
<dbReference type="InterPro" id="IPR029058">
    <property type="entry name" value="AB_hydrolase_fold"/>
</dbReference>
<dbReference type="InterPro" id="IPR000801">
    <property type="entry name" value="Esterase-like"/>
</dbReference>
<dbReference type="InterPro" id="IPR014186">
    <property type="entry name" value="S-formylglutathione_hydrol"/>
</dbReference>
<dbReference type="NCBIfam" id="TIGR02821">
    <property type="entry name" value="fghA_ester_D"/>
    <property type="match status" value="1"/>
</dbReference>
<dbReference type="PANTHER" id="PTHR10061">
    <property type="entry name" value="S-FORMYLGLUTATHIONE HYDROLASE"/>
    <property type="match status" value="1"/>
</dbReference>
<dbReference type="PANTHER" id="PTHR10061:SF0">
    <property type="entry name" value="S-FORMYLGLUTATHIONE HYDROLASE"/>
    <property type="match status" value="1"/>
</dbReference>
<dbReference type="Pfam" id="PF00756">
    <property type="entry name" value="Esterase"/>
    <property type="match status" value="1"/>
</dbReference>
<dbReference type="SUPFAM" id="SSF53474">
    <property type="entry name" value="alpha/beta-Hydrolases"/>
    <property type="match status" value="1"/>
</dbReference>
<proteinExistence type="inferred from homology"/>
<evidence type="ECO:0000250" key="1"/>
<evidence type="ECO:0000305" key="2"/>
<comment type="function">
    <text evidence="1">Serine hydrolase involved in the detoxification of formaldehyde. Hydrolyzes S-formylglutathione to glutathione and formate (By similarity).</text>
</comment>
<comment type="catalytic activity">
    <reaction>
        <text>S-formylglutathione + H2O = formate + glutathione + H(+)</text>
        <dbReference type="Rhea" id="RHEA:14961"/>
        <dbReference type="ChEBI" id="CHEBI:15377"/>
        <dbReference type="ChEBI" id="CHEBI:15378"/>
        <dbReference type="ChEBI" id="CHEBI:15740"/>
        <dbReference type="ChEBI" id="CHEBI:57688"/>
        <dbReference type="ChEBI" id="CHEBI:57925"/>
        <dbReference type="EC" id="3.1.2.12"/>
    </reaction>
</comment>
<comment type="similarity">
    <text evidence="2">Belongs to the esterase D family.</text>
</comment>
<gene>
    <name type="primary">frmB</name>
    <name type="ordered locus">ECDH10B_0310</name>
</gene>
<feature type="chain" id="PRO_0000341655" description="S-formylglutathione hydrolase FrmB">
    <location>
        <begin position="1"/>
        <end position="277"/>
    </location>
</feature>
<feature type="active site" description="Charge relay system" evidence="1">
    <location>
        <position position="145"/>
    </location>
</feature>
<feature type="active site" description="Charge relay system" evidence="1">
    <location>
        <position position="221"/>
    </location>
</feature>
<feature type="active site" description="Charge relay system" evidence="1">
    <location>
        <position position="254"/>
    </location>
</feature>
<sequence>MELIEKHVSFGGWQNMYRHYSQSLKCEMNVGVYLPPKAANEKLPVLYWLSGLTCNEQNFITKSGMQRYAAEHNIIVVAPDTSPRGSHVADADRYDLGQGAGFYLNATQAPWNEHYKMYDYIRNELPDLVMHHFPATAKKSISGHSMGGLGALVLALRNPDEYVSVSAFSPIVSPSQVPWGQQAFAAYLAENKDAWLDYDPVSLISQGQRVAEIMVDQGLSDDFYAEQLRTPNLEKICQEMNIKTLIRYHEGYDHSYYFVSSFIGEHIAYHANKLNMR</sequence>
<accession>B1XEU8</accession>
<reference key="1">
    <citation type="journal article" date="2008" name="J. Bacteriol.">
        <title>The complete genome sequence of Escherichia coli DH10B: insights into the biology of a laboratory workhorse.</title>
        <authorList>
            <person name="Durfee T."/>
            <person name="Nelson R."/>
            <person name="Baldwin S."/>
            <person name="Plunkett G. III"/>
            <person name="Burland V."/>
            <person name="Mau B."/>
            <person name="Petrosino J.F."/>
            <person name="Qin X."/>
            <person name="Muzny D.M."/>
            <person name="Ayele M."/>
            <person name="Gibbs R.A."/>
            <person name="Csorgo B."/>
            <person name="Posfai G."/>
            <person name="Weinstock G.M."/>
            <person name="Blattner F.R."/>
        </authorList>
    </citation>
    <scope>NUCLEOTIDE SEQUENCE [LARGE SCALE GENOMIC DNA]</scope>
    <source>
        <strain>K12 / DH10B</strain>
    </source>
</reference>
<keyword id="KW-0378">Hydrolase</keyword>
<keyword id="KW-0719">Serine esterase</keyword>
<name>SFGH1_ECODH</name>